<accession>Q5J306</accession>
<comment type="function">
    <text evidence="1">Usually encoded in the trnK tRNA gene intron. Probably assists in splicing its own and other chloroplast group II introns.</text>
</comment>
<comment type="subcellular location">
    <subcellularLocation>
        <location>Plastid</location>
        <location>Chloroplast</location>
    </subcellularLocation>
</comment>
<comment type="similarity">
    <text evidence="1">Belongs to the intron maturase 2 family. MatK subfamily.</text>
</comment>
<proteinExistence type="inferred from homology"/>
<feature type="chain" id="PRO_0000143403" description="Maturase K">
    <location>
        <begin position="1"/>
        <end position="505"/>
    </location>
</feature>
<protein>
    <recommendedName>
        <fullName evidence="1">Maturase K</fullName>
    </recommendedName>
    <alternativeName>
        <fullName evidence="1">Intron maturase</fullName>
    </alternativeName>
</protein>
<organism>
    <name type="scientific">Gomphrena pulchella</name>
    <name type="common">Globe amaranth</name>
    <name type="synonym">Gomphrena rosea</name>
    <dbReference type="NCBI Taxonomy" id="270119"/>
    <lineage>
        <taxon>Eukaryota</taxon>
        <taxon>Viridiplantae</taxon>
        <taxon>Streptophyta</taxon>
        <taxon>Embryophyta</taxon>
        <taxon>Tracheophyta</taxon>
        <taxon>Spermatophyta</taxon>
        <taxon>Magnoliopsida</taxon>
        <taxon>eudicotyledons</taxon>
        <taxon>Gunneridae</taxon>
        <taxon>Pentapetalae</taxon>
        <taxon>Caryophyllales</taxon>
        <taxon>Amaranthaceae</taxon>
        <taxon>Gomphrenoideae</taxon>
        <taxon>Gomphrena</taxon>
    </lineage>
</organism>
<sequence>MEEFQGHRELDRSWQHNFLYPLIFQEYIYTXAYDNGLNKLILLENGVDQKYSLLTVKRLITRLYQQNHLILSANDSNQNEIFGHKHKKNLYLQMITEGFAVIVEIPFSLLLISSLDGKEKKIVKSPNLQSIHSIFPFLEDKFLYLNYVLDILIPYPAHLEILVQTLRYWLKDASSLHLLRFFFYECRNWTSRITSKESISFLKTRNRRLFLFLYNFYVCEYESFFVILRNQSSYLRSTSFGALLERIHFYGKFKYLVKVKACAVILCFFKEPFPHYVRYQGKALLASKGTSLLMHKWKYYFISFWQCYFSVWSQPRRIYINQLSNYSLDFMGFLSSVRFNSSVIRSQMLENSFLLENIRNKFDPIVPISPLVGSLAKSKFCNVLGHPIGKSVWTDLSDSDIIDRFGRICRNLSHYYSGSSRKKNLYRIKYILRLSCARTLSRKHKSTVRAFLKRLGSEFLEEFFTEEEKVLSLILPRDSSTSGGLYKGRVWYLDIICIHNLVNDQ</sequence>
<keyword id="KW-0150">Chloroplast</keyword>
<keyword id="KW-0507">mRNA processing</keyword>
<keyword id="KW-0934">Plastid</keyword>
<keyword id="KW-0694">RNA-binding</keyword>
<keyword id="KW-0819">tRNA processing</keyword>
<dbReference type="EMBL" id="AY514802">
    <property type="protein sequence ID" value="AAT28232.1"/>
    <property type="molecule type" value="Genomic_DNA"/>
</dbReference>
<dbReference type="GO" id="GO:0009507">
    <property type="term" value="C:chloroplast"/>
    <property type="evidence" value="ECO:0007669"/>
    <property type="project" value="UniProtKB-SubCell"/>
</dbReference>
<dbReference type="GO" id="GO:0003723">
    <property type="term" value="F:RNA binding"/>
    <property type="evidence" value="ECO:0007669"/>
    <property type="project" value="UniProtKB-KW"/>
</dbReference>
<dbReference type="GO" id="GO:0006397">
    <property type="term" value="P:mRNA processing"/>
    <property type="evidence" value="ECO:0007669"/>
    <property type="project" value="UniProtKB-KW"/>
</dbReference>
<dbReference type="GO" id="GO:0008380">
    <property type="term" value="P:RNA splicing"/>
    <property type="evidence" value="ECO:0007669"/>
    <property type="project" value="UniProtKB-UniRule"/>
</dbReference>
<dbReference type="GO" id="GO:0008033">
    <property type="term" value="P:tRNA processing"/>
    <property type="evidence" value="ECO:0007669"/>
    <property type="project" value="UniProtKB-KW"/>
</dbReference>
<dbReference type="HAMAP" id="MF_01390">
    <property type="entry name" value="MatK"/>
    <property type="match status" value="1"/>
</dbReference>
<dbReference type="InterPro" id="IPR024937">
    <property type="entry name" value="Domain_X"/>
</dbReference>
<dbReference type="InterPro" id="IPR002866">
    <property type="entry name" value="Maturase_MatK"/>
</dbReference>
<dbReference type="InterPro" id="IPR024942">
    <property type="entry name" value="Maturase_MatK_N"/>
</dbReference>
<dbReference type="PANTHER" id="PTHR34811">
    <property type="entry name" value="MATURASE K"/>
    <property type="match status" value="1"/>
</dbReference>
<dbReference type="PANTHER" id="PTHR34811:SF1">
    <property type="entry name" value="MATURASE K"/>
    <property type="match status" value="1"/>
</dbReference>
<dbReference type="Pfam" id="PF01348">
    <property type="entry name" value="Intron_maturas2"/>
    <property type="match status" value="1"/>
</dbReference>
<dbReference type="Pfam" id="PF01824">
    <property type="entry name" value="MatK_N"/>
    <property type="match status" value="1"/>
</dbReference>
<reference key="1">
    <citation type="journal article" date="2005" name="Ann. Mo. Bot. Gard.">
        <title>Phylogenetics of Amaranthaceae based on matK/trnK sequence data -- evidence from parsimony, likelihood, and Bayesian analyses.</title>
        <authorList>
            <person name="Mueller K."/>
            <person name="Borsch T."/>
        </authorList>
    </citation>
    <scope>NUCLEOTIDE SEQUENCE [GENOMIC DNA]</scope>
</reference>
<name>MATK_GOMPU</name>
<evidence type="ECO:0000255" key="1">
    <source>
        <dbReference type="HAMAP-Rule" id="MF_01390"/>
    </source>
</evidence>
<gene>
    <name evidence="1" type="primary">matK</name>
</gene>
<geneLocation type="chloroplast"/>